<proteinExistence type="inferred from homology"/>
<reference key="1">
    <citation type="submission" date="2005-09" db="EMBL/GenBank/DDBJ databases">
        <title>Canine myosin heavy chain expression.</title>
        <authorList>
            <person name="Maccatrozzo L."/>
            <person name="Patruno M."/>
            <person name="Mascarello F."/>
            <person name="Reggiani C."/>
        </authorList>
    </citation>
    <scope>NUCLEOTIDE SEQUENCE [GENOMIC DNA]</scope>
</reference>
<name>MYH8_CANLF</name>
<accession>Q076A4</accession>
<evidence type="ECO:0000250" key="1"/>
<evidence type="ECO:0000250" key="2">
    <source>
        <dbReference type="UniProtKB" id="Q28641"/>
    </source>
</evidence>
<evidence type="ECO:0000250" key="3">
    <source>
        <dbReference type="UniProtKB" id="Q29RW1"/>
    </source>
</evidence>
<evidence type="ECO:0000255" key="4"/>
<evidence type="ECO:0000255" key="5">
    <source>
        <dbReference type="PROSITE-ProRule" id="PRU00116"/>
    </source>
</evidence>
<evidence type="ECO:0000255" key="6">
    <source>
        <dbReference type="PROSITE-ProRule" id="PRU00782"/>
    </source>
</evidence>
<evidence type="ECO:0000255" key="7">
    <source>
        <dbReference type="PROSITE-ProRule" id="PRU01190"/>
    </source>
</evidence>
<evidence type="ECO:0000305" key="8"/>
<feature type="chain" id="PRO_0000274170" description="Myosin-8">
    <location>
        <begin position="1"/>
        <end position="1939"/>
    </location>
</feature>
<feature type="domain" description="Myosin N-terminal SH3-like" evidence="7">
    <location>
        <begin position="35"/>
        <end position="84"/>
    </location>
</feature>
<feature type="domain" description="Myosin motor" evidence="6">
    <location>
        <begin position="88"/>
        <end position="783"/>
    </location>
</feature>
<feature type="domain" description="IQ" evidence="5">
    <location>
        <begin position="783"/>
        <end position="815"/>
    </location>
</feature>
<feature type="region of interest" description="Actin-binding" evidence="1">
    <location>
        <begin position="660"/>
        <end position="682"/>
    </location>
</feature>
<feature type="region of interest" description="Actin-binding" evidence="1">
    <location>
        <begin position="762"/>
        <end position="776"/>
    </location>
</feature>
<feature type="coiled-coil region" evidence="4">
    <location>
        <begin position="844"/>
        <end position="1939"/>
    </location>
</feature>
<feature type="binding site" evidence="1">
    <location>
        <begin position="181"/>
        <end position="188"/>
    </location>
    <ligand>
        <name>ATP</name>
        <dbReference type="ChEBI" id="CHEBI:30616"/>
    </ligand>
</feature>
<feature type="modified residue" description="Phosphothreonine" evidence="3">
    <location>
        <position position="66"/>
    </location>
</feature>
<feature type="modified residue" description="Phosphothreonine" evidence="3">
    <location>
        <position position="71"/>
    </location>
</feature>
<feature type="modified residue" description="N6,N6,N6-trimethyllysine" evidence="4">
    <location>
        <position position="132"/>
    </location>
</feature>
<feature type="modified residue" description="Phosphotyrosine" evidence="3">
    <location>
        <position position="391"/>
    </location>
</feature>
<feature type="modified residue" description="Phosphothreonine" evidence="3">
    <location>
        <position position="421"/>
    </location>
</feature>
<feature type="modified residue" description="Phosphotyrosine" evidence="3">
    <location>
        <position position="426"/>
    </location>
</feature>
<feature type="modified residue" description="Phosphoserine" evidence="3">
    <location>
        <position position="627"/>
    </location>
</feature>
<feature type="modified residue" description="Pros-methylhistidine" evidence="2">
    <location>
        <position position="758"/>
    </location>
</feature>
<feature type="modified residue" description="Phosphoserine" evidence="3">
    <location>
        <position position="1093"/>
    </location>
</feature>
<feature type="modified residue" description="Phosphoserine" evidence="3">
    <location>
        <position position="1097"/>
    </location>
</feature>
<feature type="modified residue" description="Phosphoserine" evidence="3">
    <location>
        <position position="1163"/>
    </location>
</feature>
<feature type="modified residue" description="Phosphoserine" evidence="3">
    <location>
        <position position="1238"/>
    </location>
</feature>
<feature type="modified residue" description="Phosphothreonine" evidence="3">
    <location>
        <position position="1242"/>
    </location>
</feature>
<feature type="modified residue" description="Phosphoserine" evidence="3">
    <location>
        <position position="1244"/>
    </location>
</feature>
<feature type="modified residue" description="Phosphothreonine" evidence="3">
    <location>
        <position position="1256"/>
    </location>
</feature>
<feature type="modified residue" description="Phosphoserine" evidence="3">
    <location>
        <position position="1262"/>
    </location>
</feature>
<feature type="modified residue" description="Phosphothreonine" evidence="3">
    <location>
        <position position="1266"/>
    </location>
</feature>
<feature type="modified residue" description="Phosphothreonine" evidence="3">
    <location>
        <position position="1287"/>
    </location>
</feature>
<feature type="modified residue" description="Phosphoserine" evidence="3">
    <location>
        <position position="1293"/>
    </location>
</feature>
<feature type="modified residue" description="Phosphoserine" evidence="3">
    <location>
        <position position="1304"/>
    </location>
</feature>
<feature type="modified residue" description="Phosphoserine" evidence="3">
    <location>
        <position position="1307"/>
    </location>
</feature>
<feature type="modified residue" description="Phosphotyrosine" evidence="3">
    <location>
        <position position="1465"/>
    </location>
</feature>
<feature type="modified residue" description="Phosphothreonine" evidence="3">
    <location>
        <position position="1468"/>
    </location>
</feature>
<feature type="modified residue" description="Phosphoserine" evidence="3">
    <location>
        <position position="1475"/>
    </location>
</feature>
<feature type="modified residue" description="Phosphotyrosine" evidence="3">
    <location>
        <position position="1493"/>
    </location>
</feature>
<feature type="modified residue" description="Phosphoserine" evidence="3">
    <location>
        <position position="1496"/>
    </location>
</feature>
<feature type="modified residue" description="Phosphothreonine" evidence="3">
    <location>
        <position position="1502"/>
    </location>
</feature>
<feature type="modified residue" description="Phosphoserine" evidence="3">
    <location>
        <position position="1515"/>
    </location>
</feature>
<feature type="modified residue" description="Phosphothreonine" evidence="3">
    <location>
        <position position="1518"/>
    </location>
</feature>
<feature type="modified residue" description="Phosphoserine" evidence="3">
    <location>
        <position position="1555"/>
    </location>
</feature>
<feature type="modified residue" description="Phosphoserine" evidence="3">
    <location>
        <position position="1575"/>
    </location>
</feature>
<feature type="modified residue" description="Phosphoserine" evidence="3">
    <location>
        <position position="1601"/>
    </location>
</feature>
<feature type="modified residue" description="Phosphoserine" evidence="3">
    <location>
        <position position="1604"/>
    </location>
</feature>
<feature type="modified residue" description="Phosphoserine" evidence="3">
    <location>
        <position position="1715"/>
    </location>
</feature>
<feature type="modified residue" description="Phosphoserine" evidence="3">
    <location>
        <position position="1727"/>
    </location>
</feature>
<feature type="modified residue" description="Phosphothreonine" evidence="3">
    <location>
        <position position="1731"/>
    </location>
</feature>
<feature type="modified residue" description="Phosphoserine" evidence="3">
    <location>
        <position position="1740"/>
    </location>
</feature>
<organism>
    <name type="scientific">Canis lupus familiaris</name>
    <name type="common">Dog</name>
    <name type="synonym">Canis familiaris</name>
    <dbReference type="NCBI Taxonomy" id="9615"/>
    <lineage>
        <taxon>Eukaryota</taxon>
        <taxon>Metazoa</taxon>
        <taxon>Chordata</taxon>
        <taxon>Craniata</taxon>
        <taxon>Vertebrata</taxon>
        <taxon>Euteleostomi</taxon>
        <taxon>Mammalia</taxon>
        <taxon>Eutheria</taxon>
        <taxon>Laurasiatheria</taxon>
        <taxon>Carnivora</taxon>
        <taxon>Caniformia</taxon>
        <taxon>Canidae</taxon>
        <taxon>Canis</taxon>
    </lineage>
</organism>
<sequence>MSASSDAEMAVFGEAAPFLRKSEKERIEAQNKPFDAKTSVFVAEPKASYVKSTIQSKEGGKVTVKTEGGATLTVREDQVFPMNPPKYDKIEDMAMMTHLHEPGVLYNLKERYAAWMIYTYSGLFCVTVNPYKWLPVYNPEVVAAYRGKKRQEAPPHIFSISDNAYQFMLTDRENQSILITGESGAGKTVNTKRVIQYFATIAVTGEKKKEEATSGKMQGTLEDQIISANPLLEAFGNAKTVRNDNSSRFGKFIRIHFGTTGKLASADIETYLLEKSRVTFQLKAERSYHIFYQITSNKKPDLIEMLLITTNPYDYAFVSQGEITVPSIDDQEELMATDSAIDILGFTPEEKVSIYKLTGAVMHYGNMKFKQKQREEQAEPDGTEVADKAAYLQNLNSADLLKALCYPRVKVGNEYVTKGQTVQQVYNAVGALAKAVYEKMFLWMVTRINQQLDTKQPRQYFIGVLDIAGFEIFDFNSLEQLCINFTNEKLQQFFNHHMFVLEQEEYKKEGIEWTFIDFGMDLAACIELIEKPLGIFSILEEECMFPKATDTSFKNKLYDQHLGKSANFQKPKVVKGKAEAHFSLIHYAGTVDYNIGGWLDKNKDPLNDTVVGLYQKSAMKTLASLFSTYASAEADSGAKKGAKKKGSSFQTVSALFRENLNKLMTNLRSTHPHFVRCIIPNETKTPGAMEHELVLHQLRCNGVLEGIRICRKGFPSRILYGDFKQRYKVLNASAIPEGQFIDSKKASEKLLASIDIDHTQYKFGHTKVFFKAGLLGLLEEMRDEKLSQIITRTQAVCRGFLMRVEYQKMLQRREALFCIQYNIRAFMNVKHWPWMRLFFKIKPLLKSAETEKEMATMKEEFQKTKDELAKSEAKRKELEEKMVTLLKEKNDLQLQVQSEADALADAEERCEQLIKNKIQLEAKIKEVTERAEDEEEINAELTAKKRKLEDECSELKKDIDDLELTLAKVEKEKHATENKVKNLTEEMAGLDETIAKLTKEKKALQEAHQQTLDDLQAEEDKVNTLTKAKTKLEQQVDDLEGSLEQERKLRMDLERAKRKLEGDLKLAQESTMDAENDKQQLDEKLKKKEFEISNLLSKIEDEQAIEIQLQKKIKELQARIEELEEEIEAERASRAKAEKQRSDLSRELEEISERLEEAGGATSAQIEMNKKREAEFQKMRRDLEEATLQHEATAATLRKKHADSVAELGEQIDNLQRVKQKLEKEKSEMKMEIDDLASNAETISKAKGNLEKMCRTLEDQVSELKTKEEEQQRLINDLTAQRARLQTEAGEYSRQLDEKDALVSQLSRSKQASTQQIEELKRQLEEETKAKNALAHALQSSRHDCDLLREQYEEEQEGKAELQRALSKANSEVAQWRTKYETDAIQRTEELEEAKKKLAQRLQEAEEHVEAVNAKCASLEKTKQRLQNEVEDLMLDVERSNAACAALDKKQRNFDKVLAEWKQKYEETQAELEASQKEARTLSTELFKVKNAYEESLDQVETLKRENKNLQQEISDLTEQIAEGGKQIHELEKIKKQVEQEKCDIQAALEEAEASLEHEEGKILRIQLELNQVKSEVDRKIAEKDEEIDQLKRNHIRVMESMQSTLDAEIRSRNDALRVKKKMEGDLNEMEIQLNHANRLAAESLRNYRNTQGILKDTQLHLDDALRGQEDLKEQLAMVERRANLLQAEIEELRATLEQTERSRKTAEQELLDASERVQLLHTQNTSLINTKKKLENDVSQLQSEVEEVIQESRNAEEKAKKAITDAAMMAEELKKEQDTSAHLERMKKNMEQTVKDLQHRLDEAEQLALKGGKKQIQKLEARVHELEGEVESEQKRNAEAVKGLRKHERRVKELTYQTEEDRKNVLRLQDLVDKLQAKVKSYKRQAEEAEEQSNTNLAKFRKLQHELEEAEERADIAESQVNKLRVKSREVHTKISAE</sequence>
<protein>
    <recommendedName>
        <fullName>Myosin-8</fullName>
    </recommendedName>
    <alternativeName>
        <fullName>Developmental myosin heavy chain neonatal</fullName>
    </alternativeName>
    <alternativeName>
        <fullName>Myosin heavy chain 8</fullName>
    </alternativeName>
    <alternativeName>
        <fullName>Myosin heavy chain, skeletal muscle, perinatal</fullName>
        <shortName>MyHC-perinatal</shortName>
    </alternativeName>
</protein>
<dbReference type="EMBL" id="DQ227283">
    <property type="protein sequence ID" value="ABB96410.1"/>
    <property type="molecule type" value="Genomic_DNA"/>
</dbReference>
<dbReference type="RefSeq" id="NP_001070703.1">
    <property type="nucleotide sequence ID" value="NM_001077235.1"/>
</dbReference>
<dbReference type="RefSeq" id="XP_013968652.1">
    <property type="nucleotide sequence ID" value="XM_014113177.1"/>
</dbReference>
<dbReference type="SMR" id="Q076A4"/>
<dbReference type="FunCoup" id="Q076A4">
    <property type="interactions" value="30"/>
</dbReference>
<dbReference type="STRING" id="9615.ENSCAFP00000025828"/>
<dbReference type="PaxDb" id="9612-ENSCAFP00000025828"/>
<dbReference type="GeneID" id="403808"/>
<dbReference type="KEGG" id="cfa:403808"/>
<dbReference type="CTD" id="4626"/>
<dbReference type="eggNOG" id="KOG0161">
    <property type="taxonomic scope" value="Eukaryota"/>
</dbReference>
<dbReference type="HOGENOM" id="CLU_000192_4_0_1"/>
<dbReference type="InParanoid" id="Q076A4"/>
<dbReference type="OMA" id="NITHVHT"/>
<dbReference type="OrthoDB" id="312459at2759"/>
<dbReference type="TreeFam" id="TF314375"/>
<dbReference type="Proteomes" id="UP000002254">
    <property type="component" value="Chromosome 5"/>
</dbReference>
<dbReference type="Proteomes" id="UP000694429">
    <property type="component" value="Unplaced"/>
</dbReference>
<dbReference type="Proteomes" id="UP000694542">
    <property type="component" value="Unplaced"/>
</dbReference>
<dbReference type="Proteomes" id="UP000805418">
    <property type="component" value="Unplaced"/>
</dbReference>
<dbReference type="Bgee" id="ENSCAFG00000017522">
    <property type="expression patterns" value="Expressed in tongue and 12 other cell types or tissues"/>
</dbReference>
<dbReference type="GO" id="GO:0005737">
    <property type="term" value="C:cytoplasm"/>
    <property type="evidence" value="ECO:0000318"/>
    <property type="project" value="GO_Central"/>
</dbReference>
<dbReference type="GO" id="GO:0030016">
    <property type="term" value="C:myofibril"/>
    <property type="evidence" value="ECO:0007669"/>
    <property type="project" value="UniProtKB-SubCell"/>
</dbReference>
<dbReference type="GO" id="GO:0032982">
    <property type="term" value="C:myosin filament"/>
    <property type="evidence" value="ECO:0000318"/>
    <property type="project" value="GO_Central"/>
</dbReference>
<dbReference type="GO" id="GO:0016460">
    <property type="term" value="C:myosin II complex"/>
    <property type="evidence" value="ECO:0000318"/>
    <property type="project" value="GO_Central"/>
</dbReference>
<dbReference type="GO" id="GO:0051015">
    <property type="term" value="F:actin filament binding"/>
    <property type="evidence" value="ECO:0000318"/>
    <property type="project" value="GO_Central"/>
</dbReference>
<dbReference type="GO" id="GO:0005524">
    <property type="term" value="F:ATP binding"/>
    <property type="evidence" value="ECO:0007669"/>
    <property type="project" value="UniProtKB-KW"/>
</dbReference>
<dbReference type="GO" id="GO:0005516">
    <property type="term" value="F:calmodulin binding"/>
    <property type="evidence" value="ECO:0007669"/>
    <property type="project" value="UniProtKB-KW"/>
</dbReference>
<dbReference type="GO" id="GO:0000146">
    <property type="term" value="F:microfilament motor activity"/>
    <property type="evidence" value="ECO:0000318"/>
    <property type="project" value="GO_Central"/>
</dbReference>
<dbReference type="GO" id="GO:0006936">
    <property type="term" value="P:muscle contraction"/>
    <property type="evidence" value="ECO:0000318"/>
    <property type="project" value="GO_Central"/>
</dbReference>
<dbReference type="FunFam" id="1.10.10.820:FF:000001">
    <property type="entry name" value="Myosin heavy chain"/>
    <property type="match status" value="1"/>
</dbReference>
<dbReference type="FunFam" id="1.20.5.340:FF:000002">
    <property type="entry name" value="Myosin heavy chain"/>
    <property type="match status" value="1"/>
</dbReference>
<dbReference type="FunFam" id="1.20.5.340:FF:000003">
    <property type="entry name" value="Myosin heavy chain"/>
    <property type="match status" value="1"/>
</dbReference>
<dbReference type="FunFam" id="1.20.5.340:FF:000004">
    <property type="entry name" value="Myosin heavy chain"/>
    <property type="match status" value="1"/>
</dbReference>
<dbReference type="FunFam" id="1.20.5.340:FF:000006">
    <property type="entry name" value="Myosin heavy chain"/>
    <property type="match status" value="1"/>
</dbReference>
<dbReference type="FunFam" id="1.20.5.340:FF:000013">
    <property type="entry name" value="Myosin heavy chain"/>
    <property type="match status" value="1"/>
</dbReference>
<dbReference type="FunFam" id="1.20.5.370:FF:000001">
    <property type="entry name" value="Myosin heavy chain"/>
    <property type="match status" value="1"/>
</dbReference>
<dbReference type="FunFam" id="1.20.5.370:FF:000002">
    <property type="entry name" value="Myosin heavy chain"/>
    <property type="match status" value="1"/>
</dbReference>
<dbReference type="FunFam" id="1.20.5.370:FF:000003">
    <property type="entry name" value="Myosin heavy chain"/>
    <property type="match status" value="1"/>
</dbReference>
<dbReference type="FunFam" id="1.20.5.370:FF:000007">
    <property type="entry name" value="Myosin heavy chain"/>
    <property type="match status" value="1"/>
</dbReference>
<dbReference type="FunFam" id="1.20.5.370:FF:000008">
    <property type="entry name" value="Myosin heavy chain"/>
    <property type="match status" value="1"/>
</dbReference>
<dbReference type="FunFam" id="1.20.5.4820:FF:000001">
    <property type="entry name" value="Myosin heavy chain"/>
    <property type="match status" value="1"/>
</dbReference>
<dbReference type="FunFam" id="1.20.58.530:FF:000001">
    <property type="entry name" value="Myosin heavy chain"/>
    <property type="match status" value="1"/>
</dbReference>
<dbReference type="FunFam" id="2.30.30.360:FF:000001">
    <property type="entry name" value="Myosin heavy chain"/>
    <property type="match status" value="1"/>
</dbReference>
<dbReference type="FunFam" id="3.40.850.10:FF:000024">
    <property type="entry name" value="Myosin heavy chain, isoform J"/>
    <property type="match status" value="1"/>
</dbReference>
<dbReference type="FunFam" id="1.20.120.720:FF:000001">
    <property type="entry name" value="Myosin heavy chain, muscle"/>
    <property type="match status" value="1"/>
</dbReference>
<dbReference type="Gene3D" id="1.10.10.820">
    <property type="match status" value="1"/>
</dbReference>
<dbReference type="Gene3D" id="1.20.5.340">
    <property type="match status" value="5"/>
</dbReference>
<dbReference type="Gene3D" id="1.20.5.370">
    <property type="match status" value="4"/>
</dbReference>
<dbReference type="Gene3D" id="1.20.5.4820">
    <property type="match status" value="1"/>
</dbReference>
<dbReference type="Gene3D" id="1.20.58.530">
    <property type="match status" value="1"/>
</dbReference>
<dbReference type="Gene3D" id="6.10.250.2420">
    <property type="match status" value="1"/>
</dbReference>
<dbReference type="Gene3D" id="3.40.850.10">
    <property type="entry name" value="Kinesin motor domain"/>
    <property type="match status" value="1"/>
</dbReference>
<dbReference type="Gene3D" id="2.30.30.360">
    <property type="entry name" value="Myosin S1 fragment, N-terminal"/>
    <property type="match status" value="1"/>
</dbReference>
<dbReference type="Gene3D" id="1.20.120.720">
    <property type="entry name" value="Myosin VI head, motor domain, U50 subdomain"/>
    <property type="match status" value="1"/>
</dbReference>
<dbReference type="InterPro" id="IPR036961">
    <property type="entry name" value="Kinesin_motor_dom_sf"/>
</dbReference>
<dbReference type="InterPro" id="IPR001609">
    <property type="entry name" value="Myosin_head_motor_dom-like"/>
</dbReference>
<dbReference type="InterPro" id="IPR004009">
    <property type="entry name" value="Myosin_N"/>
</dbReference>
<dbReference type="InterPro" id="IPR008989">
    <property type="entry name" value="Myosin_S1_N"/>
</dbReference>
<dbReference type="InterPro" id="IPR002928">
    <property type="entry name" value="Myosin_tail"/>
</dbReference>
<dbReference type="InterPro" id="IPR027417">
    <property type="entry name" value="P-loop_NTPase"/>
</dbReference>
<dbReference type="InterPro" id="IPR014751">
    <property type="entry name" value="XRCC4-like_C"/>
</dbReference>
<dbReference type="PANTHER" id="PTHR45615">
    <property type="entry name" value="MYOSIN HEAVY CHAIN, NON-MUSCLE"/>
    <property type="match status" value="1"/>
</dbReference>
<dbReference type="PANTHER" id="PTHR45615:SF35">
    <property type="entry name" value="MYOSIN-8"/>
    <property type="match status" value="1"/>
</dbReference>
<dbReference type="Pfam" id="PF00063">
    <property type="entry name" value="Myosin_head"/>
    <property type="match status" value="1"/>
</dbReference>
<dbReference type="Pfam" id="PF02736">
    <property type="entry name" value="Myosin_N"/>
    <property type="match status" value="1"/>
</dbReference>
<dbReference type="Pfam" id="PF01576">
    <property type="entry name" value="Myosin_tail_1"/>
    <property type="match status" value="1"/>
</dbReference>
<dbReference type="PRINTS" id="PR00193">
    <property type="entry name" value="MYOSINHEAVY"/>
</dbReference>
<dbReference type="SMART" id="SM00242">
    <property type="entry name" value="MYSc"/>
    <property type="match status" value="1"/>
</dbReference>
<dbReference type="SUPFAM" id="SSF90257">
    <property type="entry name" value="Myosin rod fragments"/>
    <property type="match status" value="4"/>
</dbReference>
<dbReference type="SUPFAM" id="SSF52540">
    <property type="entry name" value="P-loop containing nucleoside triphosphate hydrolases"/>
    <property type="match status" value="1"/>
</dbReference>
<dbReference type="SUPFAM" id="SSF57997">
    <property type="entry name" value="Tropomyosin"/>
    <property type="match status" value="1"/>
</dbReference>
<dbReference type="PROSITE" id="PS50096">
    <property type="entry name" value="IQ"/>
    <property type="match status" value="1"/>
</dbReference>
<dbReference type="PROSITE" id="PS51456">
    <property type="entry name" value="MYOSIN_MOTOR"/>
    <property type="match status" value="1"/>
</dbReference>
<dbReference type="PROSITE" id="PS51844">
    <property type="entry name" value="SH3_LIKE"/>
    <property type="match status" value="1"/>
</dbReference>
<comment type="function">
    <text evidence="1">Muscle contraction.</text>
</comment>
<comment type="subunit">
    <text evidence="1">Muscle myosin is a hexameric protein that consists of 2 heavy chain subunits (MHC), 2 alkali light chain subunits (MLC) and 2 regulatory light chain subunits (MLC-2).</text>
</comment>
<comment type="subcellular location">
    <subcellularLocation>
        <location evidence="1">Cytoplasm</location>
        <location evidence="1">Myofibril</location>
    </subcellularLocation>
    <text evidence="1">Thick filaments of the myofibrils.</text>
</comment>
<comment type="domain">
    <text>The rodlike tail sequence is highly repetitive, showing cycles of a 28-residue repeat pattern composed of 4 heptapeptides, characteristic for alpha-helical coiled coils.</text>
</comment>
<comment type="domain">
    <text evidence="8">Limited proteolysis of myosin heavy chain produces 1 light meromyosin (LMM) and 1 heavy meromyosin (HMM). HMM can be further cleaved into 2 globular subfragments (S1) and 1 rod-shaped subfragment (S2).</text>
</comment>
<comment type="similarity">
    <text evidence="8">Belongs to the TRAFAC class myosin-kinesin ATPase superfamily. Myosin family.</text>
</comment>
<gene>
    <name type="primary">MYH8</name>
</gene>
<keyword id="KW-0009">Actin-binding</keyword>
<keyword id="KW-0067">ATP-binding</keyword>
<keyword id="KW-0112">Calmodulin-binding</keyword>
<keyword id="KW-0175">Coiled coil</keyword>
<keyword id="KW-0963">Cytoplasm</keyword>
<keyword id="KW-0488">Methylation</keyword>
<keyword id="KW-0505">Motor protein</keyword>
<keyword id="KW-0514">Muscle protein</keyword>
<keyword id="KW-0518">Myosin</keyword>
<keyword id="KW-0547">Nucleotide-binding</keyword>
<keyword id="KW-0597">Phosphoprotein</keyword>
<keyword id="KW-1185">Reference proteome</keyword>
<keyword id="KW-0787">Thick filament</keyword>